<evidence type="ECO:0000250" key="1"/>
<evidence type="ECO:0000305" key="2"/>
<reference key="1">
    <citation type="journal article" date="1979" name="J. Biol. Chem.">
        <title>dnaG (primase)-dependent origins of DNA replication. Nucleotide sequences of the negative strand initiation sites of bacteriophages St-1, phi K, and alpha 3.</title>
        <authorList>
            <person name="Sims J."/>
            <person name="Capon D."/>
            <person name="Dressler D."/>
        </authorList>
    </citation>
    <scope>NUCLEOTIDE SEQUENCE [GENOMIC RNA]</scope>
    <scope>PROTEIN SEQUENCE OF 81-103</scope>
</reference>
<organism>
    <name type="scientific">Escherichia phage St-1</name>
    <name type="common">Bacteriophage St-1</name>
    <dbReference type="NCBI Taxonomy" id="10845"/>
    <lineage>
        <taxon>Viruses</taxon>
        <taxon>Monodnaviria</taxon>
        <taxon>Sangervirae</taxon>
        <taxon>Phixviricota</taxon>
        <taxon>Malgrandaviricetes</taxon>
        <taxon>Petitvirales</taxon>
        <taxon>Microviridae</taxon>
        <taxon>Bullavirinae</taxon>
        <taxon>Alphatrevirus</taxon>
        <taxon>Alphatrevirus St1</taxon>
    </lineage>
</organism>
<sequence length="103" mass="11005">VXLSFAGTSYPIVGIVRFESAFDQPTSIAGSQIEHYPIEMSVGSGGVCSARDCATVDIHPRTFGNNVFVGVICSSAKWTSGRVLGTIATTQVIREYQVLQPLK</sequence>
<keyword id="KW-0167">Capsid protein</keyword>
<keyword id="KW-0903">Direct protein sequencing</keyword>
<keyword id="KW-0945">Host-virus interaction</keyword>
<keyword id="KW-1161">Viral attachment to host cell</keyword>
<keyword id="KW-0946">Virion</keyword>
<keyword id="KW-1160">Virus entry into host cell</keyword>
<accession>P03645</accession>
<dbReference type="EMBL" id="J02501">
    <property type="protein sequence ID" value="AAA32606.1"/>
    <property type="molecule type" value="Genomic_RNA"/>
</dbReference>
<dbReference type="PIR" id="A04253">
    <property type="entry name" value="ZGBPS1"/>
</dbReference>
<dbReference type="GO" id="GO:0019028">
    <property type="term" value="C:viral capsid"/>
    <property type="evidence" value="ECO:0007669"/>
    <property type="project" value="UniProtKB-KW"/>
</dbReference>
<dbReference type="GO" id="GO:0046718">
    <property type="term" value="P:symbiont entry into host cell"/>
    <property type="evidence" value="ECO:0007669"/>
    <property type="project" value="UniProtKB-KW"/>
</dbReference>
<dbReference type="GO" id="GO:0044003">
    <property type="term" value="P:symbiont-mediated perturbation of host process"/>
    <property type="evidence" value="ECO:0007669"/>
    <property type="project" value="InterPro"/>
</dbReference>
<dbReference type="GO" id="GO:0019062">
    <property type="term" value="P:virion attachment to host cell"/>
    <property type="evidence" value="ECO:0007669"/>
    <property type="project" value="UniProtKB-KW"/>
</dbReference>
<dbReference type="Gene3D" id="2.60.120.20">
    <property type="match status" value="1"/>
</dbReference>
<dbReference type="InterPro" id="IPR016184">
    <property type="entry name" value="Capsid/spike_ssDNA_virus"/>
</dbReference>
<dbReference type="InterPro" id="IPR003515">
    <property type="entry name" value="Spike_G"/>
</dbReference>
<dbReference type="InterPro" id="IPR029053">
    <property type="entry name" value="Viral_coat"/>
</dbReference>
<dbReference type="Pfam" id="PF02306">
    <property type="entry name" value="Phage_G"/>
    <property type="match status" value="1"/>
</dbReference>
<dbReference type="SUPFAM" id="SSF88645">
    <property type="entry name" value="ssDNA viruses"/>
    <property type="match status" value="1"/>
</dbReference>
<feature type="chain" id="PRO_0000164897" description="Major spike protein">
    <location>
        <begin position="1" status="less than"/>
        <end position="103"/>
    </location>
</feature>
<feature type="non-terminal residue">
    <location>
        <position position="1"/>
    </location>
</feature>
<comment type="function">
    <text evidence="1">Major spike component. Involved in the attachment to the bacterial host. Involved in the determination of the phage host-range (By similarity).</text>
</comment>
<comment type="subunit">
    <text>The virion is composed of 60 copies each of the F, G, and J proteins, and 12 copies of the H protein. There are 12 spikes which are each composed of 5 G and one H proteins.</text>
</comment>
<comment type="subcellular location">
    <subcellularLocation>
        <location evidence="2">Virion</location>
    </subcellularLocation>
</comment>
<comment type="similarity">
    <text evidence="2">Belongs to the microvirus G protein family.</text>
</comment>
<gene>
    <name type="primary">G</name>
</gene>
<organismHost>
    <name type="scientific">Escherichia coli (strain K12)</name>
    <dbReference type="NCBI Taxonomy" id="83333"/>
</organismHost>
<proteinExistence type="evidence at protein level"/>
<name>G_BPST1</name>
<protein>
    <recommendedName>
        <fullName>Major spike protein</fullName>
    </recommendedName>
    <alternativeName>
        <fullName>G protein</fullName>
    </alternativeName>
    <alternativeName>
        <fullName>GPG</fullName>
    </alternativeName>
</protein>